<organism>
    <name type="scientific">Methanococcus maripaludis (strain C7 / ATCC BAA-1331)</name>
    <dbReference type="NCBI Taxonomy" id="426368"/>
    <lineage>
        <taxon>Archaea</taxon>
        <taxon>Methanobacteriati</taxon>
        <taxon>Methanobacteriota</taxon>
        <taxon>Methanomada group</taxon>
        <taxon>Methanococci</taxon>
        <taxon>Methanococcales</taxon>
        <taxon>Methanococcaceae</taxon>
        <taxon>Methanococcus</taxon>
    </lineage>
</organism>
<keyword id="KW-0963">Cytoplasm</keyword>
<keyword id="KW-0489">Methyltransferase</keyword>
<keyword id="KW-0949">S-adenosyl-L-methionine</keyword>
<keyword id="KW-0808">Transferase</keyword>
<dbReference type="EC" id="2.1.1.77" evidence="1"/>
<dbReference type="EMBL" id="CP000745">
    <property type="protein sequence ID" value="ABR66167.1"/>
    <property type="molecule type" value="Genomic_DNA"/>
</dbReference>
<dbReference type="SMR" id="A6VI91"/>
<dbReference type="STRING" id="426368.MmarC7_1101"/>
<dbReference type="KEGG" id="mmz:MmarC7_1101"/>
<dbReference type="eggNOG" id="arCOG00976">
    <property type="taxonomic scope" value="Archaea"/>
</dbReference>
<dbReference type="HOGENOM" id="CLU_055432_2_0_2"/>
<dbReference type="OrthoDB" id="33618at2157"/>
<dbReference type="GO" id="GO:0005737">
    <property type="term" value="C:cytoplasm"/>
    <property type="evidence" value="ECO:0007669"/>
    <property type="project" value="UniProtKB-SubCell"/>
</dbReference>
<dbReference type="GO" id="GO:0004719">
    <property type="term" value="F:protein-L-isoaspartate (D-aspartate) O-methyltransferase activity"/>
    <property type="evidence" value="ECO:0007669"/>
    <property type="project" value="UniProtKB-UniRule"/>
</dbReference>
<dbReference type="GO" id="GO:0032259">
    <property type="term" value="P:methylation"/>
    <property type="evidence" value="ECO:0007669"/>
    <property type="project" value="UniProtKB-KW"/>
</dbReference>
<dbReference type="GO" id="GO:0036211">
    <property type="term" value="P:protein modification process"/>
    <property type="evidence" value="ECO:0007669"/>
    <property type="project" value="UniProtKB-UniRule"/>
</dbReference>
<dbReference type="GO" id="GO:0030091">
    <property type="term" value="P:protein repair"/>
    <property type="evidence" value="ECO:0007669"/>
    <property type="project" value="UniProtKB-UniRule"/>
</dbReference>
<dbReference type="CDD" id="cd02440">
    <property type="entry name" value="AdoMet_MTases"/>
    <property type="match status" value="1"/>
</dbReference>
<dbReference type="FunFam" id="3.40.50.150:FF:000010">
    <property type="entry name" value="Protein-L-isoaspartate O-methyltransferase"/>
    <property type="match status" value="1"/>
</dbReference>
<dbReference type="Gene3D" id="3.40.50.150">
    <property type="entry name" value="Vaccinia Virus protein VP39"/>
    <property type="match status" value="1"/>
</dbReference>
<dbReference type="HAMAP" id="MF_00090">
    <property type="entry name" value="PIMT"/>
    <property type="match status" value="1"/>
</dbReference>
<dbReference type="InterPro" id="IPR000682">
    <property type="entry name" value="PCMT"/>
</dbReference>
<dbReference type="InterPro" id="IPR029063">
    <property type="entry name" value="SAM-dependent_MTases_sf"/>
</dbReference>
<dbReference type="NCBIfam" id="TIGR00080">
    <property type="entry name" value="pimt"/>
    <property type="match status" value="1"/>
</dbReference>
<dbReference type="NCBIfam" id="NF001453">
    <property type="entry name" value="PRK00312.1"/>
    <property type="match status" value="1"/>
</dbReference>
<dbReference type="NCBIfam" id="NF010549">
    <property type="entry name" value="PRK13942.1"/>
    <property type="match status" value="1"/>
</dbReference>
<dbReference type="PANTHER" id="PTHR11579">
    <property type="entry name" value="PROTEIN-L-ISOASPARTATE O-METHYLTRANSFERASE"/>
    <property type="match status" value="1"/>
</dbReference>
<dbReference type="PANTHER" id="PTHR11579:SF0">
    <property type="entry name" value="PROTEIN-L-ISOASPARTATE(D-ASPARTATE) O-METHYLTRANSFERASE"/>
    <property type="match status" value="1"/>
</dbReference>
<dbReference type="Pfam" id="PF01135">
    <property type="entry name" value="PCMT"/>
    <property type="match status" value="1"/>
</dbReference>
<dbReference type="SUPFAM" id="SSF53335">
    <property type="entry name" value="S-adenosyl-L-methionine-dependent methyltransferases"/>
    <property type="match status" value="1"/>
</dbReference>
<dbReference type="PROSITE" id="PS01279">
    <property type="entry name" value="PCMT"/>
    <property type="match status" value="1"/>
</dbReference>
<reference key="1">
    <citation type="submission" date="2007-06" db="EMBL/GenBank/DDBJ databases">
        <title>Complete sequence of Methanococcus maripaludis C7.</title>
        <authorList>
            <consortium name="US DOE Joint Genome Institute"/>
            <person name="Copeland A."/>
            <person name="Lucas S."/>
            <person name="Lapidus A."/>
            <person name="Barry K."/>
            <person name="Glavina del Rio T."/>
            <person name="Dalin E."/>
            <person name="Tice H."/>
            <person name="Pitluck S."/>
            <person name="Clum A."/>
            <person name="Schmutz J."/>
            <person name="Larimer F."/>
            <person name="Land M."/>
            <person name="Hauser L."/>
            <person name="Kyrpides N."/>
            <person name="Anderson I."/>
            <person name="Sieprawska-Lupa M."/>
            <person name="Whitman W.B."/>
            <person name="Richardson P."/>
        </authorList>
    </citation>
    <scope>NUCLEOTIDE SEQUENCE [LARGE SCALE GENOMIC DNA]</scope>
    <source>
        <strain>C7 / ATCC BAA-1331</strain>
    </source>
</reference>
<protein>
    <recommendedName>
        <fullName evidence="1">Protein-L-isoaspartate O-methyltransferase</fullName>
        <ecNumber evidence="1">2.1.1.77</ecNumber>
    </recommendedName>
    <alternativeName>
        <fullName evidence="1">L-isoaspartyl protein carboxyl methyltransferase</fullName>
    </alternativeName>
    <alternativeName>
        <fullName evidence="1">Protein L-isoaspartyl methyltransferase</fullName>
    </alternativeName>
    <alternativeName>
        <fullName evidence="1">Protein-beta-aspartate methyltransferase</fullName>
        <shortName evidence="1">PIMT</shortName>
    </alternativeName>
</protein>
<accession>A6VI91</accession>
<gene>
    <name evidence="1" type="primary">pcm</name>
    <name type="ordered locus">MmarC7_1101</name>
</gene>
<sequence>MPLNEIVGVIGNLISNGYIKKQSVIDALMTVPRHKFIPKSMEEYAYIDSPLGIGYGQTISAIHMVGIMCEELDLDVGQNVLEVGTGSGYHAAVVSEIVGESGNVTTIERIPELFEKSKQVLLELGYENVEVVLGDGTKGYLENSPYDRIYVTASGPDVPKALFEQLNDGGIILAPVGSHFQTLMRYKKIHGKIFEEKLLEVAFVPLIGENGF</sequence>
<evidence type="ECO:0000255" key="1">
    <source>
        <dbReference type="HAMAP-Rule" id="MF_00090"/>
    </source>
</evidence>
<name>PIMT_METM7</name>
<comment type="function">
    <text evidence="1">Catalyzes the methyl esterification of L-isoaspartyl residues in peptides and proteins that result from spontaneous decomposition of normal L-aspartyl and L-asparaginyl residues. It plays a role in the repair and/or degradation of damaged proteins.</text>
</comment>
<comment type="catalytic activity">
    <reaction evidence="1">
        <text>[protein]-L-isoaspartate + S-adenosyl-L-methionine = [protein]-L-isoaspartate alpha-methyl ester + S-adenosyl-L-homocysteine</text>
        <dbReference type="Rhea" id="RHEA:12705"/>
        <dbReference type="Rhea" id="RHEA-COMP:12143"/>
        <dbReference type="Rhea" id="RHEA-COMP:12144"/>
        <dbReference type="ChEBI" id="CHEBI:57856"/>
        <dbReference type="ChEBI" id="CHEBI:59789"/>
        <dbReference type="ChEBI" id="CHEBI:90596"/>
        <dbReference type="ChEBI" id="CHEBI:90598"/>
        <dbReference type="EC" id="2.1.1.77"/>
    </reaction>
</comment>
<comment type="subcellular location">
    <subcellularLocation>
        <location evidence="1">Cytoplasm</location>
    </subcellularLocation>
</comment>
<comment type="similarity">
    <text evidence="1">Belongs to the methyltransferase superfamily. L-isoaspartyl/D-aspartyl protein methyltransferase family.</text>
</comment>
<proteinExistence type="inferred from homology"/>
<feature type="chain" id="PRO_1000004822" description="Protein-L-isoaspartate O-methyltransferase">
    <location>
        <begin position="1"/>
        <end position="212"/>
    </location>
</feature>
<feature type="active site" evidence="1">
    <location>
        <position position="60"/>
    </location>
</feature>